<dbReference type="EMBL" id="CP000851">
    <property type="protein sequence ID" value="ABV89145.1"/>
    <property type="molecule type" value="Genomic_DNA"/>
</dbReference>
<dbReference type="RefSeq" id="WP_012157027.1">
    <property type="nucleotide sequence ID" value="NC_009901.1"/>
</dbReference>
<dbReference type="SMR" id="A8H9A8"/>
<dbReference type="STRING" id="398579.Spea_3835"/>
<dbReference type="KEGG" id="spl:Spea_3835"/>
<dbReference type="eggNOG" id="COG0267">
    <property type="taxonomic scope" value="Bacteria"/>
</dbReference>
<dbReference type="HOGENOM" id="CLU_190949_1_1_6"/>
<dbReference type="OrthoDB" id="21586at2"/>
<dbReference type="Proteomes" id="UP000002608">
    <property type="component" value="Chromosome"/>
</dbReference>
<dbReference type="GO" id="GO:0022625">
    <property type="term" value="C:cytosolic large ribosomal subunit"/>
    <property type="evidence" value="ECO:0007669"/>
    <property type="project" value="TreeGrafter"/>
</dbReference>
<dbReference type="GO" id="GO:0003735">
    <property type="term" value="F:structural constituent of ribosome"/>
    <property type="evidence" value="ECO:0007669"/>
    <property type="project" value="InterPro"/>
</dbReference>
<dbReference type="GO" id="GO:0006412">
    <property type="term" value="P:translation"/>
    <property type="evidence" value="ECO:0007669"/>
    <property type="project" value="UniProtKB-UniRule"/>
</dbReference>
<dbReference type="FunFam" id="2.20.28.120:FF:000001">
    <property type="entry name" value="50S ribosomal protein L33"/>
    <property type="match status" value="1"/>
</dbReference>
<dbReference type="Gene3D" id="2.20.28.120">
    <property type="entry name" value="Ribosomal protein L33"/>
    <property type="match status" value="1"/>
</dbReference>
<dbReference type="HAMAP" id="MF_00294">
    <property type="entry name" value="Ribosomal_bL33"/>
    <property type="match status" value="1"/>
</dbReference>
<dbReference type="InterPro" id="IPR001705">
    <property type="entry name" value="Ribosomal_bL33"/>
</dbReference>
<dbReference type="InterPro" id="IPR018264">
    <property type="entry name" value="Ribosomal_bL33_CS"/>
</dbReference>
<dbReference type="InterPro" id="IPR038584">
    <property type="entry name" value="Ribosomal_bL33_sf"/>
</dbReference>
<dbReference type="InterPro" id="IPR011332">
    <property type="entry name" value="Ribosomal_zn-bd"/>
</dbReference>
<dbReference type="NCBIfam" id="NF001860">
    <property type="entry name" value="PRK00595.1"/>
    <property type="match status" value="1"/>
</dbReference>
<dbReference type="NCBIfam" id="TIGR01023">
    <property type="entry name" value="rpmG_bact"/>
    <property type="match status" value="1"/>
</dbReference>
<dbReference type="PANTHER" id="PTHR15238">
    <property type="entry name" value="54S RIBOSOMAL PROTEIN L39, MITOCHONDRIAL"/>
    <property type="match status" value="1"/>
</dbReference>
<dbReference type="PANTHER" id="PTHR15238:SF1">
    <property type="entry name" value="LARGE RIBOSOMAL SUBUNIT PROTEIN BL33M"/>
    <property type="match status" value="1"/>
</dbReference>
<dbReference type="Pfam" id="PF00471">
    <property type="entry name" value="Ribosomal_L33"/>
    <property type="match status" value="1"/>
</dbReference>
<dbReference type="SUPFAM" id="SSF57829">
    <property type="entry name" value="Zn-binding ribosomal proteins"/>
    <property type="match status" value="1"/>
</dbReference>
<dbReference type="PROSITE" id="PS00582">
    <property type="entry name" value="RIBOSOMAL_L33"/>
    <property type="match status" value="1"/>
</dbReference>
<organism>
    <name type="scientific">Shewanella pealeana (strain ATCC 700345 / ANG-SQ1)</name>
    <dbReference type="NCBI Taxonomy" id="398579"/>
    <lineage>
        <taxon>Bacteria</taxon>
        <taxon>Pseudomonadati</taxon>
        <taxon>Pseudomonadota</taxon>
        <taxon>Gammaproteobacteria</taxon>
        <taxon>Alteromonadales</taxon>
        <taxon>Shewanellaceae</taxon>
        <taxon>Shewanella</taxon>
    </lineage>
</organism>
<proteinExistence type="inferred from homology"/>
<evidence type="ECO:0000255" key="1">
    <source>
        <dbReference type="HAMAP-Rule" id="MF_00294"/>
    </source>
</evidence>
<evidence type="ECO:0000305" key="2"/>
<protein>
    <recommendedName>
        <fullName evidence="1">Large ribosomal subunit protein bL33</fullName>
    </recommendedName>
    <alternativeName>
        <fullName evidence="2">50S ribosomal protein L33</fullName>
    </alternativeName>
</protein>
<sequence>MAKAKGNREKIKLVSSANTGHFYTTEKNKRNMPEKMEIKKFDPVIRQHVMYKEAKIK</sequence>
<keyword id="KW-1185">Reference proteome</keyword>
<keyword id="KW-0687">Ribonucleoprotein</keyword>
<keyword id="KW-0689">Ribosomal protein</keyword>
<gene>
    <name evidence="1" type="primary">rpmG</name>
    <name type="ordered locus">Spea_3835</name>
</gene>
<reference key="1">
    <citation type="submission" date="2007-10" db="EMBL/GenBank/DDBJ databases">
        <title>Complete sequence of Shewanella pealeana ATCC 700345.</title>
        <authorList>
            <consortium name="US DOE Joint Genome Institute"/>
            <person name="Copeland A."/>
            <person name="Lucas S."/>
            <person name="Lapidus A."/>
            <person name="Barry K."/>
            <person name="Glavina del Rio T."/>
            <person name="Dalin E."/>
            <person name="Tice H."/>
            <person name="Pitluck S."/>
            <person name="Chertkov O."/>
            <person name="Brettin T."/>
            <person name="Bruce D."/>
            <person name="Detter J.C."/>
            <person name="Han C."/>
            <person name="Schmutz J."/>
            <person name="Larimer F."/>
            <person name="Land M."/>
            <person name="Hauser L."/>
            <person name="Kyrpides N."/>
            <person name="Kim E."/>
            <person name="Zhao J.-S.Z."/>
            <person name="Manno D."/>
            <person name="Hawari J."/>
            <person name="Richardson P."/>
        </authorList>
    </citation>
    <scope>NUCLEOTIDE SEQUENCE [LARGE SCALE GENOMIC DNA]</scope>
    <source>
        <strain>ATCC 700345 / ANG-SQ1</strain>
    </source>
</reference>
<name>RL33_SHEPA</name>
<feature type="chain" id="PRO_0000356661" description="Large ribosomal subunit protein bL33">
    <location>
        <begin position="1"/>
        <end position="57"/>
    </location>
</feature>
<comment type="similarity">
    <text evidence="1">Belongs to the bacterial ribosomal protein bL33 family.</text>
</comment>
<accession>A8H9A8</accession>